<organism>
    <name type="scientific">Pseudomonas putida (strain ATCC 700007 / DSM 6899 / JCM 31910 / BCRC 17059 / LMG 24140 / F1)</name>
    <dbReference type="NCBI Taxonomy" id="351746"/>
    <lineage>
        <taxon>Bacteria</taxon>
        <taxon>Pseudomonadati</taxon>
        <taxon>Pseudomonadota</taxon>
        <taxon>Gammaproteobacteria</taxon>
        <taxon>Pseudomonadales</taxon>
        <taxon>Pseudomonadaceae</taxon>
        <taxon>Pseudomonas</taxon>
    </lineage>
</organism>
<evidence type="ECO:0000255" key="1">
    <source>
        <dbReference type="HAMAP-Rule" id="MF_01810"/>
    </source>
</evidence>
<evidence type="ECO:0000256" key="2">
    <source>
        <dbReference type="SAM" id="MobiDB-lite"/>
    </source>
</evidence>
<keyword id="KW-0997">Cell inner membrane</keyword>
<keyword id="KW-1003">Cell membrane</keyword>
<keyword id="KW-0143">Chaperone</keyword>
<keyword id="KW-0472">Membrane</keyword>
<keyword id="KW-0653">Protein transport</keyword>
<keyword id="KW-0812">Transmembrane</keyword>
<keyword id="KW-1133">Transmembrane helix</keyword>
<keyword id="KW-0813">Transport</keyword>
<dbReference type="EMBL" id="CP000712">
    <property type="protein sequence ID" value="ABQ81427.1"/>
    <property type="molecule type" value="Genomic_DNA"/>
</dbReference>
<dbReference type="SMR" id="A5WBB7"/>
<dbReference type="KEGG" id="ppf:Pput_5309"/>
<dbReference type="eggNOG" id="COG0706">
    <property type="taxonomic scope" value="Bacteria"/>
</dbReference>
<dbReference type="HOGENOM" id="CLU_016535_3_0_6"/>
<dbReference type="GO" id="GO:0005886">
    <property type="term" value="C:plasma membrane"/>
    <property type="evidence" value="ECO:0007669"/>
    <property type="project" value="UniProtKB-SubCell"/>
</dbReference>
<dbReference type="GO" id="GO:0032977">
    <property type="term" value="F:membrane insertase activity"/>
    <property type="evidence" value="ECO:0007669"/>
    <property type="project" value="InterPro"/>
</dbReference>
<dbReference type="GO" id="GO:0051205">
    <property type="term" value="P:protein insertion into membrane"/>
    <property type="evidence" value="ECO:0007669"/>
    <property type="project" value="TreeGrafter"/>
</dbReference>
<dbReference type="GO" id="GO:0015031">
    <property type="term" value="P:protein transport"/>
    <property type="evidence" value="ECO:0007669"/>
    <property type="project" value="UniProtKB-KW"/>
</dbReference>
<dbReference type="CDD" id="cd20070">
    <property type="entry name" value="5TM_YidC_Alb3"/>
    <property type="match status" value="1"/>
</dbReference>
<dbReference type="CDD" id="cd19961">
    <property type="entry name" value="EcYidC-like_peri"/>
    <property type="match status" value="1"/>
</dbReference>
<dbReference type="Gene3D" id="2.70.98.90">
    <property type="match status" value="1"/>
</dbReference>
<dbReference type="HAMAP" id="MF_01810">
    <property type="entry name" value="YidC_type1"/>
    <property type="match status" value="1"/>
</dbReference>
<dbReference type="InterPro" id="IPR019998">
    <property type="entry name" value="Membr_insert_YidC"/>
</dbReference>
<dbReference type="InterPro" id="IPR028053">
    <property type="entry name" value="Membr_insert_YidC_N"/>
</dbReference>
<dbReference type="InterPro" id="IPR001708">
    <property type="entry name" value="YidC/ALB3/OXA1/COX18"/>
</dbReference>
<dbReference type="InterPro" id="IPR028055">
    <property type="entry name" value="YidC/Oxa/ALB_C"/>
</dbReference>
<dbReference type="InterPro" id="IPR047196">
    <property type="entry name" value="YidC_ALB_C"/>
</dbReference>
<dbReference type="InterPro" id="IPR038221">
    <property type="entry name" value="YidC_periplasmic_sf"/>
</dbReference>
<dbReference type="NCBIfam" id="NF002352">
    <property type="entry name" value="PRK01318.1-3"/>
    <property type="match status" value="1"/>
</dbReference>
<dbReference type="NCBIfam" id="NF002353">
    <property type="entry name" value="PRK01318.1-4"/>
    <property type="match status" value="1"/>
</dbReference>
<dbReference type="NCBIfam" id="TIGR03593">
    <property type="entry name" value="yidC_nterm"/>
    <property type="match status" value="1"/>
</dbReference>
<dbReference type="NCBIfam" id="TIGR03592">
    <property type="entry name" value="yidC_oxa1_cterm"/>
    <property type="match status" value="1"/>
</dbReference>
<dbReference type="PANTHER" id="PTHR12428:SF65">
    <property type="entry name" value="CYTOCHROME C OXIDASE ASSEMBLY PROTEIN COX18, MITOCHONDRIAL"/>
    <property type="match status" value="1"/>
</dbReference>
<dbReference type="PANTHER" id="PTHR12428">
    <property type="entry name" value="OXA1"/>
    <property type="match status" value="1"/>
</dbReference>
<dbReference type="Pfam" id="PF02096">
    <property type="entry name" value="60KD_IMP"/>
    <property type="match status" value="1"/>
</dbReference>
<dbReference type="Pfam" id="PF14849">
    <property type="entry name" value="YidC_periplas"/>
    <property type="match status" value="1"/>
</dbReference>
<dbReference type="PRINTS" id="PR00701">
    <property type="entry name" value="60KDINNERMP"/>
</dbReference>
<dbReference type="PRINTS" id="PR01900">
    <property type="entry name" value="YIDCPROTEIN"/>
</dbReference>
<gene>
    <name evidence="1" type="primary">yidC</name>
    <name type="ordered locus">Pput_5309</name>
</gene>
<protein>
    <recommendedName>
        <fullName evidence="1">Membrane protein insertase YidC</fullName>
    </recommendedName>
    <alternativeName>
        <fullName evidence="1">Foldase YidC</fullName>
    </alternativeName>
    <alternativeName>
        <fullName evidence="1">Membrane integrase YidC</fullName>
    </alternativeName>
    <alternativeName>
        <fullName evidence="1">Membrane protein YidC</fullName>
    </alternativeName>
</protein>
<name>YIDC_PSEP1</name>
<comment type="function">
    <text evidence="1">Required for the insertion and/or proper folding and/or complex formation of integral membrane proteins into the membrane. Involved in integration of membrane proteins that insert both dependently and independently of the Sec translocase complex, as well as at least some lipoproteins. Aids folding of multispanning membrane proteins.</text>
</comment>
<comment type="subunit">
    <text evidence="1">Interacts with the Sec translocase complex via SecD. Specifically interacts with transmembrane segments of nascent integral membrane proteins during membrane integration.</text>
</comment>
<comment type="subcellular location">
    <subcellularLocation>
        <location evidence="1">Cell inner membrane</location>
        <topology evidence="1">Multi-pass membrane protein</topology>
    </subcellularLocation>
</comment>
<comment type="similarity">
    <text evidence="1">Belongs to the OXA1/ALB3/YidC family. Type 1 subfamily.</text>
</comment>
<feature type="chain" id="PRO_1000070143" description="Membrane protein insertase YidC">
    <location>
        <begin position="1"/>
        <end position="560"/>
    </location>
</feature>
<feature type="transmembrane region" description="Helical" evidence="1">
    <location>
        <begin position="1"/>
        <end position="21"/>
    </location>
</feature>
<feature type="transmembrane region" description="Helical" evidence="1">
    <location>
        <begin position="341"/>
        <end position="361"/>
    </location>
</feature>
<feature type="transmembrane region" description="Helical" evidence="1">
    <location>
        <begin position="367"/>
        <end position="387"/>
    </location>
</feature>
<feature type="transmembrane region" description="Helical" evidence="1">
    <location>
        <begin position="437"/>
        <end position="457"/>
    </location>
</feature>
<feature type="transmembrane region" description="Helical" evidence="1">
    <location>
        <begin position="468"/>
        <end position="488"/>
    </location>
</feature>
<feature type="transmembrane region" description="Helical" evidence="1">
    <location>
        <begin position="515"/>
        <end position="535"/>
    </location>
</feature>
<feature type="region of interest" description="Disordered" evidence="2">
    <location>
        <begin position="42"/>
        <end position="66"/>
    </location>
</feature>
<reference key="1">
    <citation type="submission" date="2007-05" db="EMBL/GenBank/DDBJ databases">
        <title>Complete sequence of Pseudomonas putida F1.</title>
        <authorList>
            <consortium name="US DOE Joint Genome Institute"/>
            <person name="Copeland A."/>
            <person name="Lucas S."/>
            <person name="Lapidus A."/>
            <person name="Barry K."/>
            <person name="Detter J.C."/>
            <person name="Glavina del Rio T."/>
            <person name="Hammon N."/>
            <person name="Israni S."/>
            <person name="Dalin E."/>
            <person name="Tice H."/>
            <person name="Pitluck S."/>
            <person name="Chain P."/>
            <person name="Malfatti S."/>
            <person name="Shin M."/>
            <person name="Vergez L."/>
            <person name="Schmutz J."/>
            <person name="Larimer F."/>
            <person name="Land M."/>
            <person name="Hauser L."/>
            <person name="Kyrpides N."/>
            <person name="Lykidis A."/>
            <person name="Parales R."/>
            <person name="Richardson P."/>
        </authorList>
    </citation>
    <scope>NUCLEOTIDE SEQUENCE [LARGE SCALE GENOMIC DNA]</scope>
    <source>
        <strain>ATCC 700007 / DSM 6899 / JCM 31910 / BCRC 17059 / LMG 24140 / F1</strain>
    </source>
</reference>
<proteinExistence type="inferred from homology"/>
<accession>A5WBB7</accession>
<sequence length="560" mass="61893">MDIKRTILIAALAVVSYVMVLKWNDDYGQAALPTQNTAASTVAPGLPDGVPAGNNGASADVPSANAESSPAELAPVALSKDLIRVKTDVLELAIDPVGGDIVQLNLPKYPRRQDHPNIPFQLFDNGGERVYLAQSGLTGTDGPDARASGRPLYAAEQKSYQLADGQEQLVVDLKFSDNGVNYIKRFSFKRGEYDLNVSYLIDNQSGQAWSGNMFAQLKRDASGDPSSSTATGTATYLGAALWTASEPYKKVSMKDIDKGSLKENVSGGWVAWLQHYFVTAWIPAKSDNNVVQTRKDSQGNYIIGYTGPVISVPAGGKVETSALLYAGPKIQSKLKELSPGLELTVDYGFLWFIAQPIFWLLQHIHSLLGNWGWSIIVLTMLIKGLFFPLSAASYRSMARMRAVAPKLAALKERFGDDRQKMSQAMMELYKKEKINPLGGCLPILVQMPVFLALYWVLLESVEMRQAPWILWITDLSIKDPFFILPIIMGATMFIQQRLNPTPPDPMQAKVMKMMPIIFTFFFLWFPAGLVLYWVVNNCLSISQQWYITRRIEAATKKAAA</sequence>